<sequence>MASPDWGYDDKNGPEQWSKLYPIANGNNQSPVDIKTSETKHDTSLKPISVSYNPATAKEIINVGHSFHVTFEDNDNRSVLKGGPLSDSYRLFQFHFHWGSTNEHGSEHTVDGVKYSAELHLTHWNSAKYSSLAEAASKADGLAVIGVLMKVGEANPKLQKILDALQAIKTKGKRAPFTNFDPSTLLPSSLDFWTYPGSLTHPPLYESVTWIICKESISVSSEQLAQFRSLLSNVEGDNAVPMQHNNRPTQPLKGRTVRASF</sequence>
<proteinExistence type="inferred from homology"/>
<comment type="function">
    <text evidence="2">Catalyzes the reversible hydration of carbon dioxide. Can hydrate cyanamide to urea.</text>
</comment>
<comment type="catalytic activity">
    <reaction evidence="2">
        <text>hydrogencarbonate + H(+) = CO2 + H2O</text>
        <dbReference type="Rhea" id="RHEA:10748"/>
        <dbReference type="ChEBI" id="CHEBI:15377"/>
        <dbReference type="ChEBI" id="CHEBI:15378"/>
        <dbReference type="ChEBI" id="CHEBI:16526"/>
        <dbReference type="ChEBI" id="CHEBI:17544"/>
        <dbReference type="EC" id="4.2.1.1"/>
    </reaction>
</comment>
<comment type="catalytic activity">
    <reaction evidence="2">
        <text>urea = cyanamide + H2O</text>
        <dbReference type="Rhea" id="RHEA:23056"/>
        <dbReference type="ChEBI" id="CHEBI:15377"/>
        <dbReference type="ChEBI" id="CHEBI:16199"/>
        <dbReference type="ChEBI" id="CHEBI:16698"/>
        <dbReference type="EC" id="4.2.1.69"/>
    </reaction>
</comment>
<comment type="cofactor">
    <cofactor evidence="2">
        <name>Zn(2+)</name>
        <dbReference type="ChEBI" id="CHEBI:29105"/>
    </cofactor>
</comment>
<comment type="activity regulation">
    <text evidence="2">Inhibited by acetazolamide.</text>
</comment>
<comment type="subcellular location">
    <subcellularLocation>
        <location evidence="1">Cytoplasm</location>
    </subcellularLocation>
</comment>
<comment type="similarity">
    <text evidence="6">Belongs to the alpha-carbonic anhydrase family.</text>
</comment>
<accession>Q7M316</accession>
<protein>
    <recommendedName>
        <fullName>Carbonic anhydrase 1</fullName>
        <ecNumber evidence="2">4.2.1.1</ecNumber>
    </recommendedName>
    <alternativeName>
        <fullName>Carbonate dehydratase I</fullName>
    </alternativeName>
    <alternativeName>
        <fullName>Carbonic anhydrase I</fullName>
        <shortName>CA-I</shortName>
    </alternativeName>
    <alternativeName>
        <fullName>Cyanamide hydratase CA1</fullName>
        <ecNumber evidence="2">4.2.1.69</ecNumber>
    </alternativeName>
</protein>
<keyword id="KW-0007">Acetylation</keyword>
<keyword id="KW-0963">Cytoplasm</keyword>
<keyword id="KW-0456">Lyase</keyword>
<keyword id="KW-0479">Metal-binding</keyword>
<keyword id="KW-1185">Reference proteome</keyword>
<keyword id="KW-0862">Zinc</keyword>
<reference key="1">
    <citation type="journal article" date="1993" name="Gene">
        <title>Characterization of the genes encoding carbonic anhydrase I of chimpanzee and gorilla: comparative analysis of 5' flanking erythroid-specific promoter sequences.</title>
        <authorList>
            <person name="Epperly B.R."/>
            <person name="Bergenhem N.C.H."/>
            <person name="Venta P.J."/>
            <person name="Tashian R.E."/>
        </authorList>
    </citation>
    <scope>NUCLEOTIDE SEQUENCE [GENOMIC DNA]</scope>
</reference>
<evidence type="ECO:0000250" key="1">
    <source>
        <dbReference type="UniProtKB" id="B0BNN3"/>
    </source>
</evidence>
<evidence type="ECO:0000250" key="2">
    <source>
        <dbReference type="UniProtKB" id="P00915"/>
    </source>
</evidence>
<evidence type="ECO:0000250" key="3">
    <source>
        <dbReference type="UniProtKB" id="P00918"/>
    </source>
</evidence>
<evidence type="ECO:0000255" key="4">
    <source>
        <dbReference type="PROSITE-ProRule" id="PRU01134"/>
    </source>
</evidence>
<evidence type="ECO:0000256" key="5">
    <source>
        <dbReference type="SAM" id="MobiDB-lite"/>
    </source>
</evidence>
<evidence type="ECO:0000305" key="6"/>
<gene>
    <name type="primary">CA1</name>
</gene>
<organism>
    <name type="scientific">Gorilla gorilla gorilla</name>
    <name type="common">Western lowland gorilla</name>
    <dbReference type="NCBI Taxonomy" id="9595"/>
    <lineage>
        <taxon>Eukaryota</taxon>
        <taxon>Metazoa</taxon>
        <taxon>Chordata</taxon>
        <taxon>Craniata</taxon>
        <taxon>Vertebrata</taxon>
        <taxon>Euteleostomi</taxon>
        <taxon>Mammalia</taxon>
        <taxon>Eutheria</taxon>
        <taxon>Euarchontoglires</taxon>
        <taxon>Primates</taxon>
        <taxon>Haplorrhini</taxon>
        <taxon>Catarrhini</taxon>
        <taxon>Hominidae</taxon>
        <taxon>Gorilla</taxon>
    </lineage>
</organism>
<name>CAH1_GORGO</name>
<feature type="initiator methionine" description="Removed" evidence="2">
    <location>
        <position position="1"/>
    </location>
</feature>
<feature type="chain" id="PRO_0000077407" description="Carbonic anhydrase 1">
    <location>
        <begin position="2"/>
        <end position="261"/>
    </location>
</feature>
<feature type="domain" description="Alpha-carbonic anhydrase" evidence="4">
    <location>
        <begin position="4"/>
        <end position="261"/>
    </location>
</feature>
<feature type="region of interest" description="Disordered" evidence="5">
    <location>
        <begin position="1"/>
        <end position="31"/>
    </location>
</feature>
<feature type="region of interest" description="Disordered" evidence="5">
    <location>
        <begin position="240"/>
        <end position="261"/>
    </location>
</feature>
<feature type="active site" description="Proton donor/acceptor" evidence="3">
    <location>
        <position position="65"/>
    </location>
</feature>
<feature type="binding site" evidence="2">
    <location>
        <position position="95"/>
    </location>
    <ligand>
        <name>Zn(2+)</name>
        <dbReference type="ChEBI" id="CHEBI:29105"/>
        <note>catalytic</note>
    </ligand>
</feature>
<feature type="binding site" evidence="2">
    <location>
        <position position="97"/>
    </location>
    <ligand>
        <name>Zn(2+)</name>
        <dbReference type="ChEBI" id="CHEBI:29105"/>
        <note>catalytic</note>
    </ligand>
</feature>
<feature type="binding site" evidence="2">
    <location>
        <position position="120"/>
    </location>
    <ligand>
        <name>Zn(2+)</name>
        <dbReference type="ChEBI" id="CHEBI:29105"/>
        <note>catalytic</note>
    </ligand>
</feature>
<feature type="binding site" evidence="3">
    <location>
        <begin position="200"/>
        <end position="201"/>
    </location>
    <ligand>
        <name>substrate</name>
    </ligand>
</feature>
<feature type="binding site" evidence="2">
    <location>
        <position position="200"/>
    </location>
    <ligand>
        <name>substrate</name>
    </ligand>
</feature>
<feature type="modified residue" description="N-acetylalanine" evidence="2">
    <location>
        <position position="2"/>
    </location>
</feature>
<dbReference type="EC" id="4.2.1.1" evidence="2"/>
<dbReference type="EC" id="4.2.1.69" evidence="2"/>
<dbReference type="PIR" id="JN0836">
    <property type="entry name" value="JN0836"/>
</dbReference>
<dbReference type="RefSeq" id="XP_018887801.1">
    <property type="nucleotide sequence ID" value="XM_019032256.4"/>
</dbReference>
<dbReference type="RefSeq" id="XP_018887802.1">
    <property type="nucleotide sequence ID" value="XM_019032257.1"/>
</dbReference>
<dbReference type="BMRB" id="Q7M316"/>
<dbReference type="SMR" id="Q7M316"/>
<dbReference type="FunCoup" id="Q7M316">
    <property type="interactions" value="160"/>
</dbReference>
<dbReference type="STRING" id="9593.ENSGGOP00000008550"/>
<dbReference type="Ensembl" id="ENSGGOT00000008784.3">
    <property type="protein sequence ID" value="ENSGGOP00000008550.3"/>
    <property type="gene ID" value="ENSGGOG00000008746.3"/>
</dbReference>
<dbReference type="GeneID" id="101131365"/>
<dbReference type="KEGG" id="ggo:101131365"/>
<dbReference type="CTD" id="759"/>
<dbReference type="eggNOG" id="KOG0382">
    <property type="taxonomic scope" value="Eukaryota"/>
</dbReference>
<dbReference type="GeneTree" id="ENSGT00940000161270"/>
<dbReference type="InParanoid" id="Q7M316"/>
<dbReference type="OMA" id="FHVNYED"/>
<dbReference type="OrthoDB" id="1734at9604"/>
<dbReference type="Proteomes" id="UP000001519">
    <property type="component" value="Chromosome 8"/>
</dbReference>
<dbReference type="Bgee" id="ENSGGOG00000008746">
    <property type="expression patterns" value="Expressed in liver"/>
</dbReference>
<dbReference type="GO" id="GO:0005737">
    <property type="term" value="C:cytoplasm"/>
    <property type="evidence" value="ECO:0000318"/>
    <property type="project" value="GO_Central"/>
</dbReference>
<dbReference type="GO" id="GO:0004064">
    <property type="term" value="F:arylesterase activity"/>
    <property type="evidence" value="ECO:0007669"/>
    <property type="project" value="Ensembl"/>
</dbReference>
<dbReference type="GO" id="GO:0004089">
    <property type="term" value="F:carbonate dehydratase activity"/>
    <property type="evidence" value="ECO:0000250"/>
    <property type="project" value="UniProtKB"/>
</dbReference>
<dbReference type="GO" id="GO:0018820">
    <property type="term" value="F:cyanamide hydratase activity"/>
    <property type="evidence" value="ECO:0000250"/>
    <property type="project" value="UniProtKB"/>
</dbReference>
<dbReference type="GO" id="GO:0008270">
    <property type="term" value="F:zinc ion binding"/>
    <property type="evidence" value="ECO:0007669"/>
    <property type="project" value="InterPro"/>
</dbReference>
<dbReference type="FunFam" id="3.10.200.10:FF:000001">
    <property type="entry name" value="Carbonic anhydrase 2"/>
    <property type="match status" value="1"/>
</dbReference>
<dbReference type="Gene3D" id="3.10.200.10">
    <property type="entry name" value="Alpha carbonic anhydrase"/>
    <property type="match status" value="1"/>
</dbReference>
<dbReference type="InterPro" id="IPR001148">
    <property type="entry name" value="CA_dom"/>
</dbReference>
<dbReference type="InterPro" id="IPR036398">
    <property type="entry name" value="CA_dom_sf"/>
</dbReference>
<dbReference type="InterPro" id="IPR023561">
    <property type="entry name" value="Carbonic_anhydrase_a-class"/>
</dbReference>
<dbReference type="PANTHER" id="PTHR18952">
    <property type="entry name" value="CARBONIC ANHYDRASE"/>
    <property type="match status" value="1"/>
</dbReference>
<dbReference type="PANTHER" id="PTHR18952:SF282">
    <property type="entry name" value="CARBONIC ANHYDRASE 1"/>
    <property type="match status" value="1"/>
</dbReference>
<dbReference type="Pfam" id="PF00194">
    <property type="entry name" value="Carb_anhydrase"/>
    <property type="match status" value="1"/>
</dbReference>
<dbReference type="SMART" id="SM01057">
    <property type="entry name" value="Carb_anhydrase"/>
    <property type="match status" value="1"/>
</dbReference>
<dbReference type="SUPFAM" id="SSF51069">
    <property type="entry name" value="Carbonic anhydrase"/>
    <property type="match status" value="1"/>
</dbReference>
<dbReference type="PROSITE" id="PS51144">
    <property type="entry name" value="ALPHA_CA_2"/>
    <property type="match status" value="1"/>
</dbReference>